<comment type="function">
    <text evidence="2 3">Plays a role in neurogenesis and neuronal migration. Necessary for correct formation of mitotic spindles and chromosome separation during mitosis (By similarity). Necessary for cytokinesis and cell proliferation (By similarity).</text>
</comment>
<comment type="subunit">
    <text evidence="2 3">Interacts with PLK1, PAFAH1B1 and DCDC1. Part of a complex containing PLK1, NUDC, dynein and dynactin (By similarity). Interacts with EML4 (via WD repeats) (By similarity).</text>
</comment>
<comment type="subcellular location">
    <subcellularLocation>
        <location evidence="1">Cytoplasm</location>
        <location evidence="1">Cytoskeleton</location>
    </subcellularLocation>
    <subcellularLocation>
        <location evidence="1">Nucleus</location>
    </subcellularLocation>
    <subcellularLocation>
        <location evidence="3">Cytoplasm</location>
        <location evidence="3">Cytoskeleton</location>
        <location evidence="3">Spindle</location>
    </subcellularLocation>
    <subcellularLocation>
        <location evidence="3">Midbody</location>
    </subcellularLocation>
    <text evidence="3">A small proportion is nuclear, in a punctate pattern (By similarity). In a filamentous pattern adjacent to the nucleus of migrating cerebellar granule cells. Colocalizes with tubulin and dynein and with the microtubule organizing center. Distributed throughout the cytoplasm of non-migrating cells (By similarity). Localizes to the mitotic spindle in a EML4-dependent manner (By similarity).</text>
</comment>
<comment type="PTM">
    <text evidence="3">Reversibly phosphorylated on serine residues during the M phase of the cell cycle. Phosphorylation on Ser-275 and Ser-327 is necessary for correct formation of mitotic spindles and chromosome separation during mitosis. Phosphorylated by PLK and other kinases (By similarity).</text>
</comment>
<comment type="similarity">
    <text evidence="7">Belongs to the nudC family.</text>
</comment>
<dbReference type="EMBL" id="BC118381">
    <property type="protein sequence ID" value="AAI18382.1"/>
    <property type="molecule type" value="mRNA"/>
</dbReference>
<dbReference type="RefSeq" id="NP_001069075.1">
    <property type="nucleotide sequence ID" value="NM_001075607.2"/>
</dbReference>
<dbReference type="SMR" id="Q17QG2"/>
<dbReference type="FunCoup" id="Q17QG2">
    <property type="interactions" value="3701"/>
</dbReference>
<dbReference type="STRING" id="9913.ENSBTAP00000005789"/>
<dbReference type="PaxDb" id="9913-ENSBTAP00000005789"/>
<dbReference type="PeptideAtlas" id="Q17QG2"/>
<dbReference type="GeneID" id="513277"/>
<dbReference type="KEGG" id="bta:513277"/>
<dbReference type="CTD" id="10726"/>
<dbReference type="VEuPathDB" id="HostDB:ENSBTAG00000004416"/>
<dbReference type="eggNOG" id="KOG2265">
    <property type="taxonomic scope" value="Eukaryota"/>
</dbReference>
<dbReference type="HOGENOM" id="CLU_047332_1_0_1"/>
<dbReference type="InParanoid" id="Q17QG2"/>
<dbReference type="OMA" id="NQMEWWS"/>
<dbReference type="OrthoDB" id="416217at2759"/>
<dbReference type="TreeFam" id="TF300147"/>
<dbReference type="Reactome" id="R-BTA-141444">
    <property type="pathway name" value="Amplification of signal from unattached kinetochores via a MAD2 inhibitory signal"/>
</dbReference>
<dbReference type="Reactome" id="R-BTA-2467813">
    <property type="pathway name" value="Separation of Sister Chromatids"/>
</dbReference>
<dbReference type="Reactome" id="R-BTA-2500257">
    <property type="pathway name" value="Resolution of Sister Chromatid Cohesion"/>
</dbReference>
<dbReference type="Reactome" id="R-BTA-5663220">
    <property type="pathway name" value="RHO GTPases Activate Formins"/>
</dbReference>
<dbReference type="Reactome" id="R-BTA-68877">
    <property type="pathway name" value="Mitotic Prometaphase"/>
</dbReference>
<dbReference type="Reactome" id="R-BTA-9648025">
    <property type="pathway name" value="EML4 and NUDC in mitotic spindle formation"/>
</dbReference>
<dbReference type="Reactome" id="R-BTA-9696270">
    <property type="pathway name" value="RND2 GTPase cycle"/>
</dbReference>
<dbReference type="Proteomes" id="UP000009136">
    <property type="component" value="Chromosome 2"/>
</dbReference>
<dbReference type="Bgee" id="ENSBTAG00000004416">
    <property type="expression patterns" value="Expressed in temporal cortex and 103 other cell types or tissues"/>
</dbReference>
<dbReference type="GO" id="GO:0005737">
    <property type="term" value="C:cytoplasm"/>
    <property type="evidence" value="ECO:0000318"/>
    <property type="project" value="GO_Central"/>
</dbReference>
<dbReference type="GO" id="GO:0005874">
    <property type="term" value="C:microtubule"/>
    <property type="evidence" value="ECO:0007669"/>
    <property type="project" value="UniProtKB-KW"/>
</dbReference>
<dbReference type="GO" id="GO:0030496">
    <property type="term" value="C:midbody"/>
    <property type="evidence" value="ECO:0000250"/>
    <property type="project" value="UniProtKB"/>
</dbReference>
<dbReference type="GO" id="GO:0072686">
    <property type="term" value="C:mitotic spindle"/>
    <property type="evidence" value="ECO:0000250"/>
    <property type="project" value="UniProtKB"/>
</dbReference>
<dbReference type="GO" id="GO:0005634">
    <property type="term" value="C:nucleus"/>
    <property type="evidence" value="ECO:0007669"/>
    <property type="project" value="UniProtKB-SubCell"/>
</dbReference>
<dbReference type="GO" id="GO:0051082">
    <property type="term" value="F:unfolded protein binding"/>
    <property type="evidence" value="ECO:0000318"/>
    <property type="project" value="GO_Central"/>
</dbReference>
<dbReference type="GO" id="GO:0051301">
    <property type="term" value="P:cell division"/>
    <property type="evidence" value="ECO:0007669"/>
    <property type="project" value="UniProtKB-KW"/>
</dbReference>
<dbReference type="GO" id="GO:0007080">
    <property type="term" value="P:mitotic metaphase chromosome alignment"/>
    <property type="evidence" value="ECO:0000250"/>
    <property type="project" value="UniProtKB"/>
</dbReference>
<dbReference type="GO" id="GO:0007052">
    <property type="term" value="P:mitotic spindle organization"/>
    <property type="evidence" value="ECO:0000250"/>
    <property type="project" value="UniProtKB"/>
</dbReference>
<dbReference type="GO" id="GO:0006457">
    <property type="term" value="P:protein folding"/>
    <property type="evidence" value="ECO:0000318"/>
    <property type="project" value="GO_Central"/>
</dbReference>
<dbReference type="CDD" id="cd06492">
    <property type="entry name" value="p23_mNUDC_like"/>
    <property type="match status" value="1"/>
</dbReference>
<dbReference type="FunFam" id="2.60.40.790:FF:000001">
    <property type="entry name" value="Nuclear migration protein nudC"/>
    <property type="match status" value="1"/>
</dbReference>
<dbReference type="Gene3D" id="2.60.40.790">
    <property type="match status" value="1"/>
</dbReference>
<dbReference type="InterPro" id="IPR007052">
    <property type="entry name" value="CS_dom"/>
</dbReference>
<dbReference type="InterPro" id="IPR008978">
    <property type="entry name" value="HSP20-like_chaperone"/>
</dbReference>
<dbReference type="InterPro" id="IPR032572">
    <property type="entry name" value="NuDC"/>
</dbReference>
<dbReference type="InterPro" id="IPR037898">
    <property type="entry name" value="NudC_fam"/>
</dbReference>
<dbReference type="InterPro" id="IPR025934">
    <property type="entry name" value="NudC_N_dom"/>
</dbReference>
<dbReference type="PANTHER" id="PTHR12356:SF3">
    <property type="entry name" value="NUCLEAR MIGRATION PROTEIN NUDC"/>
    <property type="match status" value="1"/>
</dbReference>
<dbReference type="PANTHER" id="PTHR12356">
    <property type="entry name" value="NUCLEAR MOVEMENT PROTEIN NUDC"/>
    <property type="match status" value="1"/>
</dbReference>
<dbReference type="Pfam" id="PF04969">
    <property type="entry name" value="CS"/>
    <property type="match status" value="1"/>
</dbReference>
<dbReference type="Pfam" id="PF16273">
    <property type="entry name" value="NuDC"/>
    <property type="match status" value="1"/>
</dbReference>
<dbReference type="Pfam" id="PF14050">
    <property type="entry name" value="Nudc_N"/>
    <property type="match status" value="1"/>
</dbReference>
<dbReference type="SUPFAM" id="SSF49764">
    <property type="entry name" value="HSP20-like chaperones"/>
    <property type="match status" value="1"/>
</dbReference>
<dbReference type="PROSITE" id="PS51203">
    <property type="entry name" value="CS"/>
    <property type="match status" value="1"/>
</dbReference>
<protein>
    <recommendedName>
        <fullName>Nuclear migration protein nudC</fullName>
    </recommendedName>
    <alternativeName>
        <fullName>Nuclear distribution protein C homolog</fullName>
    </alternativeName>
</protein>
<evidence type="ECO:0000250" key="1"/>
<evidence type="ECO:0000250" key="2">
    <source>
        <dbReference type="UniProtKB" id="O35685"/>
    </source>
</evidence>
<evidence type="ECO:0000250" key="3">
    <source>
        <dbReference type="UniProtKB" id="Q9Y266"/>
    </source>
</evidence>
<evidence type="ECO:0000255" key="4"/>
<evidence type="ECO:0000255" key="5">
    <source>
        <dbReference type="PROSITE-ProRule" id="PRU00547"/>
    </source>
</evidence>
<evidence type="ECO:0000256" key="6">
    <source>
        <dbReference type="SAM" id="MobiDB-lite"/>
    </source>
</evidence>
<evidence type="ECO:0000305" key="7"/>
<accession>Q17QG2</accession>
<name>NUDC_BOVIN</name>
<keyword id="KW-0007">Acetylation</keyword>
<keyword id="KW-0131">Cell cycle</keyword>
<keyword id="KW-0132">Cell division</keyword>
<keyword id="KW-0175">Coiled coil</keyword>
<keyword id="KW-0963">Cytoplasm</keyword>
<keyword id="KW-0206">Cytoskeleton</keyword>
<keyword id="KW-0493">Microtubule</keyword>
<keyword id="KW-0498">Mitosis</keyword>
<keyword id="KW-0539">Nucleus</keyword>
<keyword id="KW-0597">Phosphoprotein</keyword>
<keyword id="KW-1185">Reference proteome</keyword>
<proteinExistence type="evidence at transcript level"/>
<gene>
    <name type="primary">NUDC</name>
</gene>
<organism>
    <name type="scientific">Bos taurus</name>
    <name type="common">Bovine</name>
    <dbReference type="NCBI Taxonomy" id="9913"/>
    <lineage>
        <taxon>Eukaryota</taxon>
        <taxon>Metazoa</taxon>
        <taxon>Chordata</taxon>
        <taxon>Craniata</taxon>
        <taxon>Vertebrata</taxon>
        <taxon>Euteleostomi</taxon>
        <taxon>Mammalia</taxon>
        <taxon>Eutheria</taxon>
        <taxon>Laurasiatheria</taxon>
        <taxon>Artiodactyla</taxon>
        <taxon>Ruminantia</taxon>
        <taxon>Pecora</taxon>
        <taxon>Bovidae</taxon>
        <taxon>Bovinae</taxon>
        <taxon>Bos</taxon>
    </lineage>
</organism>
<sequence length="332" mass="38243">MGGEQEEDRFDGMLLAMAQQHEGGVQELVNTFFSFLRRKTDFFVGGEEGMAEKLITQTFNHHNQLAQKARREKRARQETERREKAERAARLAKEAKSETSGPQIKELTDEEAERLQLEIDQKKDAENQEAQLKNGSLGSPGKQEAEEEEEEDDEKDKGKLKPNLGNGADLPSYRWTQTLSELDLAVPFCVNFRLKGKDVVVDIQRRHLRVGLKGQPAIVDGELYNEVKVEESSWLIEDGKVVTVHLEKINKMEWWSRLVSSDPEINTKKINPENSKLSDLDSETRSMVEKMMYDQRQKSMGLPTSDEQKKQEILKKFMDQHPEMDFSKARFN</sequence>
<reference key="1">
    <citation type="submission" date="2006-06" db="EMBL/GenBank/DDBJ databases">
        <authorList>
            <consortium name="NIH - Mammalian Gene Collection (MGC) project"/>
        </authorList>
    </citation>
    <scope>NUCLEOTIDE SEQUENCE [LARGE SCALE MRNA]</scope>
    <source>
        <strain>Hereford</strain>
        <tissue>Fetal cerebellum</tissue>
    </source>
</reference>
<feature type="chain" id="PRO_0000327734" description="Nuclear migration protein nudC">
    <location>
        <begin position="1"/>
        <end position="332"/>
    </location>
</feature>
<feature type="domain" description="CS" evidence="5">
    <location>
        <begin position="168"/>
        <end position="259"/>
    </location>
</feature>
<feature type="region of interest" description="Disordered" evidence="6">
    <location>
        <begin position="65"/>
        <end position="108"/>
    </location>
</feature>
<feature type="region of interest" description="Disordered" evidence="6">
    <location>
        <begin position="126"/>
        <end position="171"/>
    </location>
</feature>
<feature type="region of interest" description="Interaction with EML4" evidence="3">
    <location>
        <begin position="174"/>
        <end position="332"/>
    </location>
</feature>
<feature type="coiled-coil region" evidence="4">
    <location>
        <begin position="60"/>
        <end position="134"/>
    </location>
</feature>
<feature type="short sequence motif" description="Nuclear localization signal" evidence="4">
    <location>
        <begin position="68"/>
        <end position="74"/>
    </location>
</feature>
<feature type="compositionally biased region" description="Basic and acidic residues" evidence="6">
    <location>
        <begin position="75"/>
        <end position="97"/>
    </location>
</feature>
<feature type="compositionally biased region" description="Polar residues" evidence="6">
    <location>
        <begin position="128"/>
        <end position="137"/>
    </location>
</feature>
<feature type="compositionally biased region" description="Acidic residues" evidence="6">
    <location>
        <begin position="145"/>
        <end position="154"/>
    </location>
</feature>
<feature type="modified residue" description="Phosphothreonine" evidence="3">
    <location>
        <position position="108"/>
    </location>
</feature>
<feature type="modified residue" description="Phosphoserine" evidence="3">
    <location>
        <position position="136"/>
    </location>
</feature>
<feature type="modified residue" description="Phosphoserine" evidence="3">
    <location>
        <position position="139"/>
    </location>
</feature>
<feature type="modified residue" description="N6-acetyllysine" evidence="3">
    <location>
        <position position="240"/>
    </location>
</feature>
<feature type="modified residue" description="Phosphoserine" evidence="3">
    <location>
        <position position="260"/>
    </location>
</feature>
<feature type="modified residue" description="Phosphoserine" evidence="3">
    <location>
        <position position="261"/>
    </location>
</feature>
<feature type="modified residue" description="Phosphoserine; by PLK1" evidence="3">
    <location>
        <position position="275"/>
    </location>
</feature>
<feature type="modified residue" description="Phosphoserine" evidence="3">
    <location>
        <position position="278"/>
    </location>
</feature>
<feature type="modified residue" description="Phosphoserine" evidence="3">
    <location>
        <position position="286"/>
    </location>
</feature>
<feature type="modified residue" description="Phosphoserine" evidence="3">
    <location>
        <position position="299"/>
    </location>
</feature>
<feature type="modified residue" description="Phosphoserine; by PLK1" evidence="3">
    <location>
        <position position="327"/>
    </location>
</feature>